<gene>
    <name type="primary">FAM81B</name>
</gene>
<sequence>MTSETDINKSASPTAAAKEQPEEPDGPLPGSASEQEKKVRFSPAIMSTKNSTDLVEYVDKGHSFLPAIPNTQRSQLEDRLNNQDRTIAFLLEQAFRIKEDISACLQGTHGFRKEESLARKLLENHIQTITSIVKKLSQNIEMIEEQIKARDLVATGTNFAVQDLSNKHLQGVGDLRGRVARCDSSIMKLSGDIHFIRNEHQQLEKTIQEMISSLQTVSKNLDTKVMQLLEKIEASSSEQISNLKMVQGDYRHEMNLLEFKFNSLSLNLYEEMENHQKRTENQLIKYEQEQLSRANQCLALLQEKLDMSEKNMEEKLLKLSSKLENFINTEKYEADLNKIKHTENKLSKKMSQLEKQIWDELEKMQDEYQSGFKSIHDSLNSLQRIQKTKMDLENYKVQKDLKKLQRKIAELQES</sequence>
<accession>Q0II90</accession>
<feature type="chain" id="PRO_0000265121" description="Protein FAM81B">
    <location>
        <begin position="1"/>
        <end position="414"/>
    </location>
</feature>
<feature type="region of interest" description="Disordered" evidence="2">
    <location>
        <begin position="1"/>
        <end position="43"/>
    </location>
</feature>
<feature type="coiled-coil region" evidence="1">
    <location>
        <begin position="70"/>
        <end position="94"/>
    </location>
</feature>
<feature type="coiled-coil region" evidence="1">
    <location>
        <begin position="121"/>
        <end position="149"/>
    </location>
</feature>
<feature type="coiled-coil region" evidence="1">
    <location>
        <begin position="188"/>
        <end position="223"/>
    </location>
</feature>
<feature type="coiled-coil region" evidence="1">
    <location>
        <begin position="266"/>
        <end position="414"/>
    </location>
</feature>
<feature type="compositionally biased region" description="Polar residues" evidence="2">
    <location>
        <begin position="1"/>
        <end position="13"/>
    </location>
</feature>
<comment type="similarity">
    <text evidence="3">Belongs to the FAM81 family.</text>
</comment>
<reference key="1">
    <citation type="submission" date="2006-08" db="EMBL/GenBank/DDBJ databases">
        <authorList>
            <consortium name="NIH - Mammalian Gene Collection (MGC) project"/>
        </authorList>
    </citation>
    <scope>NUCLEOTIDE SEQUENCE [LARGE SCALE MRNA]</scope>
    <source>
        <strain>Crossbred X Angus</strain>
        <tissue>Liver</tissue>
    </source>
</reference>
<evidence type="ECO:0000255" key="1"/>
<evidence type="ECO:0000256" key="2">
    <source>
        <dbReference type="SAM" id="MobiDB-lite"/>
    </source>
</evidence>
<evidence type="ECO:0000305" key="3"/>
<proteinExistence type="evidence at transcript level"/>
<name>FA81B_BOVIN</name>
<dbReference type="EMBL" id="BC122751">
    <property type="protein sequence ID" value="AAI22752.1"/>
    <property type="molecule type" value="mRNA"/>
</dbReference>
<dbReference type="RefSeq" id="NP_001069156.1">
    <property type="nucleotide sequence ID" value="NM_001075688.2"/>
</dbReference>
<dbReference type="SMR" id="Q0II90"/>
<dbReference type="FunCoup" id="Q0II90">
    <property type="interactions" value="31"/>
</dbReference>
<dbReference type="STRING" id="9913.ENSBTAP00000025680"/>
<dbReference type="PaxDb" id="9913-ENSBTAP00000025680"/>
<dbReference type="Ensembl" id="ENSBTAT00000025680.5">
    <property type="protein sequence ID" value="ENSBTAP00000025680.4"/>
    <property type="gene ID" value="ENSBTAG00000019287.5"/>
</dbReference>
<dbReference type="GeneID" id="514910"/>
<dbReference type="KEGG" id="bta:514910"/>
<dbReference type="CTD" id="153643"/>
<dbReference type="VEuPathDB" id="HostDB:ENSBTAG00000019287"/>
<dbReference type="VGNC" id="VGNC:28831">
    <property type="gene designation" value="FAM81B"/>
</dbReference>
<dbReference type="eggNOG" id="ENOG502QPWB">
    <property type="taxonomic scope" value="Eukaryota"/>
</dbReference>
<dbReference type="GeneTree" id="ENSGT00390000004985"/>
<dbReference type="HOGENOM" id="CLU_056304_0_0_1"/>
<dbReference type="InParanoid" id="Q0II90"/>
<dbReference type="OMA" id="NHQKWTE"/>
<dbReference type="OrthoDB" id="10014002at2759"/>
<dbReference type="TreeFam" id="TF335682"/>
<dbReference type="Proteomes" id="UP000009136">
    <property type="component" value="Chromosome 7"/>
</dbReference>
<dbReference type="Bgee" id="ENSBTAG00000019287">
    <property type="expression patterns" value="Expressed in semen and 28 other cell types or tissues"/>
</dbReference>
<dbReference type="InterPro" id="IPR029619">
    <property type="entry name" value="FAM81"/>
</dbReference>
<dbReference type="PANTHER" id="PTHR22420">
    <property type="entry name" value="PROTEIN FAM81A"/>
    <property type="match status" value="1"/>
</dbReference>
<dbReference type="PANTHER" id="PTHR22420:SF5">
    <property type="entry name" value="PROTEIN FAM81B"/>
    <property type="match status" value="1"/>
</dbReference>
<protein>
    <recommendedName>
        <fullName>Protein FAM81B</fullName>
    </recommendedName>
</protein>
<organism>
    <name type="scientific">Bos taurus</name>
    <name type="common">Bovine</name>
    <dbReference type="NCBI Taxonomy" id="9913"/>
    <lineage>
        <taxon>Eukaryota</taxon>
        <taxon>Metazoa</taxon>
        <taxon>Chordata</taxon>
        <taxon>Craniata</taxon>
        <taxon>Vertebrata</taxon>
        <taxon>Euteleostomi</taxon>
        <taxon>Mammalia</taxon>
        <taxon>Eutheria</taxon>
        <taxon>Laurasiatheria</taxon>
        <taxon>Artiodactyla</taxon>
        <taxon>Ruminantia</taxon>
        <taxon>Pecora</taxon>
        <taxon>Bovidae</taxon>
        <taxon>Bovinae</taxon>
        <taxon>Bos</taxon>
    </lineage>
</organism>
<keyword id="KW-0175">Coiled coil</keyword>
<keyword id="KW-1185">Reference proteome</keyword>